<name>TYSY_ASCSU</name>
<organism>
    <name type="scientific">Ascaris suum</name>
    <name type="common">Pig roundworm</name>
    <name type="synonym">Ascaris lumbricoides</name>
    <dbReference type="NCBI Taxonomy" id="6253"/>
    <lineage>
        <taxon>Eukaryota</taxon>
        <taxon>Metazoa</taxon>
        <taxon>Ecdysozoa</taxon>
        <taxon>Nematoda</taxon>
        <taxon>Chromadorea</taxon>
        <taxon>Rhabditida</taxon>
        <taxon>Spirurina</taxon>
        <taxon>Ascaridomorpha</taxon>
        <taxon>Ascaridoidea</taxon>
        <taxon>Ascarididae</taxon>
        <taxon>Ascaris</taxon>
    </lineage>
</organism>
<protein>
    <recommendedName>
        <fullName>Thymidylate synthase</fullName>
        <shortName>TS</shortName>
        <shortName>TSase</shortName>
        <ecNumber>2.1.1.45</ecNumber>
    </recommendedName>
</protein>
<evidence type="ECO:0000250" key="1"/>
<evidence type="ECO:0000250" key="2">
    <source>
        <dbReference type="UniProtKB" id="P0A884"/>
    </source>
</evidence>
<evidence type="ECO:0000305" key="3"/>
<dbReference type="EC" id="2.1.1.45"/>
<dbReference type="EMBL" id="AF099672">
    <property type="protein sequence ID" value="AAC97507.1"/>
    <property type="molecule type" value="mRNA"/>
</dbReference>
<dbReference type="SMR" id="O96650"/>
<dbReference type="UniPathway" id="UPA00575"/>
<dbReference type="GO" id="GO:0005829">
    <property type="term" value="C:cytosol"/>
    <property type="evidence" value="ECO:0007669"/>
    <property type="project" value="TreeGrafter"/>
</dbReference>
<dbReference type="GO" id="GO:0005739">
    <property type="term" value="C:mitochondrion"/>
    <property type="evidence" value="ECO:0007669"/>
    <property type="project" value="TreeGrafter"/>
</dbReference>
<dbReference type="GO" id="GO:0004799">
    <property type="term" value="F:thymidylate synthase activity"/>
    <property type="evidence" value="ECO:0007669"/>
    <property type="project" value="UniProtKB-EC"/>
</dbReference>
<dbReference type="GO" id="GO:0006231">
    <property type="term" value="P:dTMP biosynthetic process"/>
    <property type="evidence" value="ECO:0007669"/>
    <property type="project" value="InterPro"/>
</dbReference>
<dbReference type="GO" id="GO:0006235">
    <property type="term" value="P:dTTP biosynthetic process"/>
    <property type="evidence" value="ECO:0007669"/>
    <property type="project" value="UniProtKB-UniPathway"/>
</dbReference>
<dbReference type="GO" id="GO:0032259">
    <property type="term" value="P:methylation"/>
    <property type="evidence" value="ECO:0007669"/>
    <property type="project" value="UniProtKB-KW"/>
</dbReference>
<dbReference type="CDD" id="cd00351">
    <property type="entry name" value="TS_Pyrimidine_HMase"/>
    <property type="match status" value="1"/>
</dbReference>
<dbReference type="FunFam" id="3.30.572.10:FF:000002">
    <property type="entry name" value="Possible thymidylate synthase"/>
    <property type="match status" value="1"/>
</dbReference>
<dbReference type="Gene3D" id="3.30.572.10">
    <property type="entry name" value="Thymidylate synthase/dCMP hydroxymethylase domain"/>
    <property type="match status" value="1"/>
</dbReference>
<dbReference type="HAMAP" id="MF_00008">
    <property type="entry name" value="Thymidy_synth_bact"/>
    <property type="match status" value="1"/>
</dbReference>
<dbReference type="InterPro" id="IPR045097">
    <property type="entry name" value="Thymidate_synth/dCMP_Mease"/>
</dbReference>
<dbReference type="InterPro" id="IPR023451">
    <property type="entry name" value="Thymidate_synth/dCMP_Mease_dom"/>
</dbReference>
<dbReference type="InterPro" id="IPR036926">
    <property type="entry name" value="Thymidate_synth/dCMP_Mease_sf"/>
</dbReference>
<dbReference type="InterPro" id="IPR000398">
    <property type="entry name" value="Thymidylate_synthase"/>
</dbReference>
<dbReference type="InterPro" id="IPR020940">
    <property type="entry name" value="Thymidylate_synthase_AS"/>
</dbReference>
<dbReference type="NCBIfam" id="NF002497">
    <property type="entry name" value="PRK01827.1-3"/>
    <property type="match status" value="1"/>
</dbReference>
<dbReference type="NCBIfam" id="TIGR03284">
    <property type="entry name" value="thym_sym"/>
    <property type="match status" value="1"/>
</dbReference>
<dbReference type="PANTHER" id="PTHR11548:SF2">
    <property type="entry name" value="THYMIDYLATE SYNTHASE"/>
    <property type="match status" value="1"/>
</dbReference>
<dbReference type="PANTHER" id="PTHR11548">
    <property type="entry name" value="THYMIDYLATE SYNTHASE 1"/>
    <property type="match status" value="1"/>
</dbReference>
<dbReference type="Pfam" id="PF00303">
    <property type="entry name" value="Thymidylat_synt"/>
    <property type="match status" value="1"/>
</dbReference>
<dbReference type="PRINTS" id="PR00108">
    <property type="entry name" value="THYMDSNTHASE"/>
</dbReference>
<dbReference type="SUPFAM" id="SSF55831">
    <property type="entry name" value="Thymidylate synthase/dCMP hydroxymethylase"/>
    <property type="match status" value="1"/>
</dbReference>
<dbReference type="PROSITE" id="PS00091">
    <property type="entry name" value="THYMIDYLATE_SYNTHASE"/>
    <property type="match status" value="1"/>
</dbReference>
<accession>O96650</accession>
<feature type="chain" id="PRO_0000140904" description="Thymidylate synthase">
    <location>
        <begin position="1"/>
        <end position="294"/>
    </location>
</feature>
<feature type="active site" description="Nucleophile" evidence="2">
    <location>
        <position position="176"/>
    </location>
</feature>
<feature type="binding site" description="in other chain" evidence="2">
    <location>
        <position position="30"/>
    </location>
    <ligand>
        <name>dUMP</name>
        <dbReference type="ChEBI" id="CHEBI:246422"/>
        <note>ligand shared between dimeric partners</note>
    </ligand>
</feature>
<feature type="binding site" evidence="2">
    <location>
        <begin position="156"/>
        <end position="157"/>
    </location>
    <ligand>
        <name>dUMP</name>
        <dbReference type="ChEBI" id="CHEBI:246422"/>
        <note>ligand shared between dimeric partners</note>
    </ligand>
</feature>
<feature type="binding site" description="in other chain" evidence="2">
    <location>
        <begin position="196"/>
        <end position="199"/>
    </location>
    <ligand>
        <name>dUMP</name>
        <dbReference type="ChEBI" id="CHEBI:246422"/>
        <note>ligand shared between dimeric partners</note>
    </ligand>
</feature>
<feature type="binding site" evidence="2">
    <location>
        <position position="199"/>
    </location>
    <ligand>
        <name>(6R)-5,10-methylene-5,6,7,8-tetrahydrofolate</name>
        <dbReference type="ChEBI" id="CHEBI:15636"/>
    </ligand>
</feature>
<feature type="binding site" description="in other chain" evidence="2">
    <location>
        <position position="207"/>
    </location>
    <ligand>
        <name>dUMP</name>
        <dbReference type="ChEBI" id="CHEBI:246422"/>
        <note>ligand shared between dimeric partners</note>
    </ligand>
</feature>
<feature type="binding site" description="in other chain" evidence="2">
    <location>
        <begin position="237"/>
        <end position="239"/>
    </location>
    <ligand>
        <name>dUMP</name>
        <dbReference type="ChEBI" id="CHEBI:246422"/>
        <note>ligand shared between dimeric partners</note>
    </ligand>
</feature>
<feature type="binding site" evidence="2">
    <location>
        <position position="293"/>
    </location>
    <ligand>
        <name>(6R)-5,10-methylene-5,6,7,8-tetrahydrofolate</name>
        <dbReference type="ChEBI" id="CHEBI:15636"/>
    </ligand>
</feature>
<sequence>MEGANVNEDERKYLRQIKHIIDEGDKVIDRTGVGTLSLFGLHSTYSLRNGVIPLLTTKRVYWKGVVEELLWFIKGDTDAKRLSAKGVKIWDANGSREFLDSQGFKDRPEGDLGPIYGFQWRHFGAEYHGTDADYKGQGVDQLADVIEQIKNNPNSRRIILNAWNVKDLHQMALPPCHTLAQFAVKNGELSCQLYQRSGDMGLGVPFNLASYGLLTHMIAHVCALKTGFLHHVLGDAHVYLNHIDALKEQLSRDPRPFPTVHFEGRIDSIDDFTAESIILNGYNPMAPIKMPMAV</sequence>
<reference key="1">
    <citation type="submission" date="1998-10" db="EMBL/GenBank/DDBJ databases">
        <title>Molecular cloning of thymidylate synthase from Ascaris suum.</title>
        <authorList>
            <person name="Tian L."/>
            <person name="Tam J.W.O."/>
        </authorList>
    </citation>
    <scope>NUCLEOTIDE SEQUENCE [MRNA]</scope>
</reference>
<keyword id="KW-0489">Methyltransferase</keyword>
<keyword id="KW-0545">Nucleotide biosynthesis</keyword>
<keyword id="KW-0808">Transferase</keyword>
<comment type="catalytic activity">
    <reaction>
        <text>dUMP + (6R)-5,10-methylene-5,6,7,8-tetrahydrofolate = 7,8-dihydrofolate + dTMP</text>
        <dbReference type="Rhea" id="RHEA:12104"/>
        <dbReference type="ChEBI" id="CHEBI:15636"/>
        <dbReference type="ChEBI" id="CHEBI:57451"/>
        <dbReference type="ChEBI" id="CHEBI:63528"/>
        <dbReference type="ChEBI" id="CHEBI:246422"/>
        <dbReference type="EC" id="2.1.1.45"/>
    </reaction>
</comment>
<comment type="pathway">
    <text>Pyrimidine metabolism; dTTP biosynthesis.</text>
</comment>
<comment type="subunit">
    <text evidence="1">Homodimer.</text>
</comment>
<comment type="similarity">
    <text evidence="3">Belongs to the thymidylate synthase family.</text>
</comment>
<proteinExistence type="evidence at transcript level"/>